<evidence type="ECO:0000255" key="1">
    <source>
        <dbReference type="HAMAP-Rule" id="MF_00601"/>
    </source>
</evidence>
<feature type="chain" id="PRO_1000130087" description="Ethanolamine ammonia-lyase small subunit">
    <location>
        <begin position="1"/>
        <end position="295"/>
    </location>
</feature>
<feature type="binding site" evidence="1">
    <location>
        <position position="207"/>
    </location>
    <ligand>
        <name>adenosylcob(III)alamin</name>
        <dbReference type="ChEBI" id="CHEBI:18408"/>
    </ligand>
</feature>
<feature type="binding site" evidence="1">
    <location>
        <position position="228"/>
    </location>
    <ligand>
        <name>adenosylcob(III)alamin</name>
        <dbReference type="ChEBI" id="CHEBI:18408"/>
    </ligand>
</feature>
<feature type="binding site" evidence="1">
    <location>
        <position position="258"/>
    </location>
    <ligand>
        <name>adenosylcob(III)alamin</name>
        <dbReference type="ChEBI" id="CHEBI:18408"/>
    </ligand>
</feature>
<protein>
    <recommendedName>
        <fullName evidence="1">Ethanolamine ammonia-lyase small subunit</fullName>
        <shortName evidence="1">EAL small subunit</shortName>
        <ecNumber evidence="1">4.3.1.7</ecNumber>
    </recommendedName>
</protein>
<comment type="function">
    <text evidence="1">Catalyzes the deamination of various vicinal amino-alcohols to oxo compounds. Allows this organism to utilize ethanolamine as the sole source of nitrogen and carbon in the presence of external vitamin B12.</text>
</comment>
<comment type="catalytic activity">
    <reaction evidence="1">
        <text>ethanolamine = acetaldehyde + NH4(+)</text>
        <dbReference type="Rhea" id="RHEA:15313"/>
        <dbReference type="ChEBI" id="CHEBI:15343"/>
        <dbReference type="ChEBI" id="CHEBI:28938"/>
        <dbReference type="ChEBI" id="CHEBI:57603"/>
        <dbReference type="EC" id="4.3.1.7"/>
    </reaction>
</comment>
<comment type="cofactor">
    <cofactor evidence="1">
        <name>adenosylcob(III)alamin</name>
        <dbReference type="ChEBI" id="CHEBI:18408"/>
    </cofactor>
    <text evidence="1">Binds between the large and small subunits.</text>
</comment>
<comment type="pathway">
    <text evidence="1">Amine and polyamine degradation; ethanolamine degradation.</text>
</comment>
<comment type="subunit">
    <text evidence="1">The basic unit is a heterodimer which dimerizes to form tetramers. The heterotetramers trimerize; 6 large subunits form a core ring with 6 small subunits projecting outwards.</text>
</comment>
<comment type="subcellular location">
    <subcellularLocation>
        <location evidence="1">Bacterial microcompartment</location>
    </subcellularLocation>
</comment>
<comment type="similarity">
    <text evidence="1">Belongs to the EutC family.</text>
</comment>
<keyword id="KW-1283">Bacterial microcompartment</keyword>
<keyword id="KW-0846">Cobalamin</keyword>
<keyword id="KW-0170">Cobalt</keyword>
<keyword id="KW-0456">Lyase</keyword>
<sequence length="295" mass="31769">MDQKQIEEIVRSVMASMGQAAPAPSEAKCATTTCAAPVTSESCALDLGSAEAKAWIGVENPHRADVLTELRRSTVARVCTGRAGPRPRTQALLRFLADHSRSKDTVLKEVPEEWVKAQGLLEVRSEISDKNLYLTRPDMGRRLCAEAVEALKAQCVANPDVQVVISDGLSTDAITVNYEEILPPLMAGLKQAGLKVGTPFFVRYGRVKIEDQIGEILGAKVVILLVGERPGLGQSESLSCYAVYSPRMATTVEADRTCISNIHQGGTPPVEAAAVIVDLAKRMLEQKASGINMTR</sequence>
<dbReference type="EC" id="4.3.1.7" evidence="1"/>
<dbReference type="EMBL" id="CU928164">
    <property type="protein sequence ID" value="CAR18709.1"/>
    <property type="molecule type" value="Genomic_DNA"/>
</dbReference>
<dbReference type="RefSeq" id="WP_000372321.1">
    <property type="nucleotide sequence ID" value="NC_011750.1"/>
</dbReference>
<dbReference type="RefSeq" id="YP_002408535.1">
    <property type="nucleotide sequence ID" value="NC_011750.1"/>
</dbReference>
<dbReference type="SMR" id="B7NPX6"/>
<dbReference type="STRING" id="585057.ECIAI39_2585"/>
<dbReference type="KEGG" id="ect:ECIAI39_2585"/>
<dbReference type="PATRIC" id="fig|585057.6.peg.2691"/>
<dbReference type="HOGENOM" id="CLU_068224_0_0_6"/>
<dbReference type="UniPathway" id="UPA00560"/>
<dbReference type="Proteomes" id="UP000000749">
    <property type="component" value="Chromosome"/>
</dbReference>
<dbReference type="GO" id="GO:0009350">
    <property type="term" value="C:ethanolamine ammonia-lyase complex"/>
    <property type="evidence" value="ECO:0007669"/>
    <property type="project" value="UniProtKB-UniRule"/>
</dbReference>
<dbReference type="GO" id="GO:0031471">
    <property type="term" value="C:ethanolamine degradation polyhedral organelle"/>
    <property type="evidence" value="ECO:0007669"/>
    <property type="project" value="UniProtKB-UniRule"/>
</dbReference>
<dbReference type="GO" id="GO:0031419">
    <property type="term" value="F:cobalamin binding"/>
    <property type="evidence" value="ECO:0007669"/>
    <property type="project" value="UniProtKB-UniRule"/>
</dbReference>
<dbReference type="GO" id="GO:0008851">
    <property type="term" value="F:ethanolamine ammonia-lyase activity"/>
    <property type="evidence" value="ECO:0007669"/>
    <property type="project" value="UniProtKB-UniRule"/>
</dbReference>
<dbReference type="GO" id="GO:0006520">
    <property type="term" value="P:amino acid metabolic process"/>
    <property type="evidence" value="ECO:0007669"/>
    <property type="project" value="InterPro"/>
</dbReference>
<dbReference type="GO" id="GO:0046336">
    <property type="term" value="P:ethanolamine catabolic process"/>
    <property type="evidence" value="ECO:0007669"/>
    <property type="project" value="UniProtKB-UniRule"/>
</dbReference>
<dbReference type="FunFam" id="3.40.50.11240:FF:000001">
    <property type="entry name" value="Ethanolamine ammonia-lyase light chain"/>
    <property type="match status" value="1"/>
</dbReference>
<dbReference type="Gene3D" id="6.10.140.690">
    <property type="match status" value="1"/>
</dbReference>
<dbReference type="Gene3D" id="6.10.250.2060">
    <property type="match status" value="1"/>
</dbReference>
<dbReference type="Gene3D" id="3.40.50.11240">
    <property type="entry name" value="Ethanolamine ammonia-lyase light chain (EutC)"/>
    <property type="match status" value="1"/>
</dbReference>
<dbReference type="HAMAP" id="MF_00601">
    <property type="entry name" value="EutC"/>
    <property type="match status" value="1"/>
</dbReference>
<dbReference type="InterPro" id="IPR009246">
    <property type="entry name" value="EutC"/>
</dbReference>
<dbReference type="InterPro" id="IPR042251">
    <property type="entry name" value="EutC_C"/>
</dbReference>
<dbReference type="NCBIfam" id="NF003971">
    <property type="entry name" value="PRK05465.1"/>
    <property type="match status" value="1"/>
</dbReference>
<dbReference type="PANTHER" id="PTHR39330">
    <property type="entry name" value="ETHANOLAMINE AMMONIA-LYASE LIGHT CHAIN"/>
    <property type="match status" value="1"/>
</dbReference>
<dbReference type="PANTHER" id="PTHR39330:SF1">
    <property type="entry name" value="ETHANOLAMINE AMMONIA-LYASE SMALL SUBUNIT"/>
    <property type="match status" value="1"/>
</dbReference>
<dbReference type="Pfam" id="PF05985">
    <property type="entry name" value="EutC"/>
    <property type="match status" value="1"/>
</dbReference>
<dbReference type="PIRSF" id="PIRSF018982">
    <property type="entry name" value="EutC"/>
    <property type="match status" value="1"/>
</dbReference>
<reference key="1">
    <citation type="journal article" date="2009" name="PLoS Genet.">
        <title>Organised genome dynamics in the Escherichia coli species results in highly diverse adaptive paths.</title>
        <authorList>
            <person name="Touchon M."/>
            <person name="Hoede C."/>
            <person name="Tenaillon O."/>
            <person name="Barbe V."/>
            <person name="Baeriswyl S."/>
            <person name="Bidet P."/>
            <person name="Bingen E."/>
            <person name="Bonacorsi S."/>
            <person name="Bouchier C."/>
            <person name="Bouvet O."/>
            <person name="Calteau A."/>
            <person name="Chiapello H."/>
            <person name="Clermont O."/>
            <person name="Cruveiller S."/>
            <person name="Danchin A."/>
            <person name="Diard M."/>
            <person name="Dossat C."/>
            <person name="Karoui M.E."/>
            <person name="Frapy E."/>
            <person name="Garry L."/>
            <person name="Ghigo J.M."/>
            <person name="Gilles A.M."/>
            <person name="Johnson J."/>
            <person name="Le Bouguenec C."/>
            <person name="Lescat M."/>
            <person name="Mangenot S."/>
            <person name="Martinez-Jehanne V."/>
            <person name="Matic I."/>
            <person name="Nassif X."/>
            <person name="Oztas S."/>
            <person name="Petit M.A."/>
            <person name="Pichon C."/>
            <person name="Rouy Z."/>
            <person name="Ruf C.S."/>
            <person name="Schneider D."/>
            <person name="Tourret J."/>
            <person name="Vacherie B."/>
            <person name="Vallenet D."/>
            <person name="Medigue C."/>
            <person name="Rocha E.P.C."/>
            <person name="Denamur E."/>
        </authorList>
    </citation>
    <scope>NUCLEOTIDE SEQUENCE [LARGE SCALE GENOMIC DNA]</scope>
    <source>
        <strain>IAI39 / ExPEC</strain>
    </source>
</reference>
<gene>
    <name evidence="1" type="primary">eutC</name>
    <name type="ordered locus">ECIAI39_2585</name>
</gene>
<organism>
    <name type="scientific">Escherichia coli O7:K1 (strain IAI39 / ExPEC)</name>
    <dbReference type="NCBI Taxonomy" id="585057"/>
    <lineage>
        <taxon>Bacteria</taxon>
        <taxon>Pseudomonadati</taxon>
        <taxon>Pseudomonadota</taxon>
        <taxon>Gammaproteobacteria</taxon>
        <taxon>Enterobacterales</taxon>
        <taxon>Enterobacteriaceae</taxon>
        <taxon>Escherichia</taxon>
    </lineage>
</organism>
<accession>B7NPX6</accession>
<name>EUTC_ECO7I</name>
<proteinExistence type="inferred from homology"/>